<evidence type="ECO:0000255" key="1">
    <source>
        <dbReference type="HAMAP-Rule" id="MF_00003"/>
    </source>
</evidence>
<evidence type="ECO:0000256" key="2">
    <source>
        <dbReference type="SAM" id="MobiDB-lite"/>
    </source>
</evidence>
<reference key="1">
    <citation type="journal article" date="2007" name="Genome Biol.">
        <title>Comparison of Francisella tularensis genomes reveals evolutionary events associated with the emergence of human pathogenic strains.</title>
        <authorList>
            <person name="Rohmer L."/>
            <person name="Fong C."/>
            <person name="Abmayr S."/>
            <person name="Wasnick M."/>
            <person name="Larson Freeman T.J."/>
            <person name="Radey M."/>
            <person name="Guina T."/>
            <person name="Svensson K."/>
            <person name="Hayden H.S."/>
            <person name="Jacobs M."/>
            <person name="Gallagher L.A."/>
            <person name="Manoil C."/>
            <person name="Ernst R.K."/>
            <person name="Drees B."/>
            <person name="Buckley D."/>
            <person name="Haugen E."/>
            <person name="Bovee D."/>
            <person name="Zhou Y."/>
            <person name="Chang J."/>
            <person name="Levy R."/>
            <person name="Lim R."/>
            <person name="Gillett W."/>
            <person name="Guenthener D."/>
            <person name="Kang A."/>
            <person name="Shaffer S.A."/>
            <person name="Taylor G."/>
            <person name="Chen J."/>
            <person name="Gallis B."/>
            <person name="D'Argenio D.A."/>
            <person name="Forsman M."/>
            <person name="Olson M.V."/>
            <person name="Goodlett D.R."/>
            <person name="Kaul R."/>
            <person name="Miller S.I."/>
            <person name="Brittnacher M.J."/>
        </authorList>
    </citation>
    <scope>NUCLEOTIDE SEQUENCE [LARGE SCALE GENOMIC DNA]</scope>
    <source>
        <strain>U112</strain>
    </source>
</reference>
<dbReference type="EMBL" id="CP000439">
    <property type="protein sequence ID" value="ABK90517.1"/>
    <property type="molecule type" value="Genomic_DNA"/>
</dbReference>
<dbReference type="RefSeq" id="WP_003035158.1">
    <property type="nucleotide sequence ID" value="NZ_CP009633.1"/>
</dbReference>
<dbReference type="SMR" id="A0Q8F2"/>
<dbReference type="GeneID" id="75264610"/>
<dbReference type="KEGG" id="ftn:FTN_1659"/>
<dbReference type="KEGG" id="ftx:AW25_329"/>
<dbReference type="BioCyc" id="FTUL401614:G1G75-1720-MONOMER"/>
<dbReference type="Proteomes" id="UP000000762">
    <property type="component" value="Chromosome"/>
</dbReference>
<dbReference type="GO" id="GO:0005829">
    <property type="term" value="C:cytosol"/>
    <property type="evidence" value="ECO:0007669"/>
    <property type="project" value="TreeGrafter"/>
</dbReference>
<dbReference type="GO" id="GO:0043024">
    <property type="term" value="F:ribosomal small subunit binding"/>
    <property type="evidence" value="ECO:0007669"/>
    <property type="project" value="TreeGrafter"/>
</dbReference>
<dbReference type="GO" id="GO:0030490">
    <property type="term" value="P:maturation of SSU-rRNA"/>
    <property type="evidence" value="ECO:0007669"/>
    <property type="project" value="UniProtKB-UniRule"/>
</dbReference>
<dbReference type="Gene3D" id="3.30.300.20">
    <property type="match status" value="1"/>
</dbReference>
<dbReference type="HAMAP" id="MF_00003">
    <property type="entry name" value="RbfA"/>
    <property type="match status" value="1"/>
</dbReference>
<dbReference type="InterPro" id="IPR015946">
    <property type="entry name" value="KH_dom-like_a/b"/>
</dbReference>
<dbReference type="InterPro" id="IPR000238">
    <property type="entry name" value="RbfA"/>
</dbReference>
<dbReference type="InterPro" id="IPR023799">
    <property type="entry name" value="RbfA_dom_sf"/>
</dbReference>
<dbReference type="InterPro" id="IPR020053">
    <property type="entry name" value="Ribosome-bd_factorA_CS"/>
</dbReference>
<dbReference type="NCBIfam" id="TIGR00082">
    <property type="entry name" value="rbfA"/>
    <property type="match status" value="1"/>
</dbReference>
<dbReference type="PANTHER" id="PTHR33515">
    <property type="entry name" value="RIBOSOME-BINDING FACTOR A, CHLOROPLASTIC-RELATED"/>
    <property type="match status" value="1"/>
</dbReference>
<dbReference type="PANTHER" id="PTHR33515:SF1">
    <property type="entry name" value="RIBOSOME-BINDING FACTOR A, CHLOROPLASTIC-RELATED"/>
    <property type="match status" value="1"/>
</dbReference>
<dbReference type="Pfam" id="PF02033">
    <property type="entry name" value="RBFA"/>
    <property type="match status" value="1"/>
</dbReference>
<dbReference type="SUPFAM" id="SSF89919">
    <property type="entry name" value="Ribosome-binding factor A, RbfA"/>
    <property type="match status" value="1"/>
</dbReference>
<dbReference type="PROSITE" id="PS01319">
    <property type="entry name" value="RBFA"/>
    <property type="match status" value="1"/>
</dbReference>
<proteinExistence type="inferred from homology"/>
<name>RBFA_FRATN</name>
<organism>
    <name type="scientific">Francisella tularensis subsp. novicida (strain U112)</name>
    <dbReference type="NCBI Taxonomy" id="401614"/>
    <lineage>
        <taxon>Bacteria</taxon>
        <taxon>Pseudomonadati</taxon>
        <taxon>Pseudomonadota</taxon>
        <taxon>Gammaproteobacteria</taxon>
        <taxon>Thiotrichales</taxon>
        <taxon>Francisellaceae</taxon>
        <taxon>Francisella</taxon>
    </lineage>
</organism>
<feature type="chain" id="PRO_1000000110" description="Ribosome-binding factor A">
    <location>
        <begin position="1"/>
        <end position="143"/>
    </location>
</feature>
<feature type="region of interest" description="Disordered" evidence="2">
    <location>
        <begin position="123"/>
        <end position="143"/>
    </location>
</feature>
<keyword id="KW-0963">Cytoplasm</keyword>
<keyword id="KW-0690">Ribosome biogenesis</keyword>
<accession>A0Q8F2</accession>
<gene>
    <name evidence="1" type="primary">rbfA</name>
    <name type="ordered locus">FTN_1659</name>
</gene>
<protein>
    <recommendedName>
        <fullName evidence="1">Ribosome-binding factor A</fullName>
    </recommendedName>
</protein>
<sequence length="143" mass="16382">MAAEGRVQRVASELQKVISLLLRTRIKDAKLASATITEVDLSKDLSYAKIYYTCLAIEDAEYIDKAFEKSKGFFRSSIAKSLSLRIVPNLKFIYDTSLDYGMQMEEKIQQALEADSKIIKQDDKSLQENYKQNDKETKAEKLR</sequence>
<comment type="function">
    <text evidence="1">One of several proteins that assist in the late maturation steps of the functional core of the 30S ribosomal subunit. Associates with free 30S ribosomal subunits (but not with 30S subunits that are part of 70S ribosomes or polysomes). Required for efficient processing of 16S rRNA. May interact with the 5'-terminal helix region of 16S rRNA.</text>
</comment>
<comment type="subunit">
    <text evidence="1">Monomer. Binds 30S ribosomal subunits, but not 50S ribosomal subunits or 70S ribosomes.</text>
</comment>
<comment type="subcellular location">
    <subcellularLocation>
        <location evidence="1">Cytoplasm</location>
    </subcellularLocation>
</comment>
<comment type="similarity">
    <text evidence="1">Belongs to the RbfA family.</text>
</comment>